<organism>
    <name type="scientific">Salmonella typhimurium (strain LT2 / SGSC1412 / ATCC 700720)</name>
    <dbReference type="NCBI Taxonomy" id="99287"/>
    <lineage>
        <taxon>Bacteria</taxon>
        <taxon>Pseudomonadati</taxon>
        <taxon>Pseudomonadota</taxon>
        <taxon>Gammaproteobacteria</taxon>
        <taxon>Enterobacterales</taxon>
        <taxon>Enterobacteriaceae</taxon>
        <taxon>Salmonella</taxon>
    </lineage>
</organism>
<protein>
    <recommendedName>
        <fullName evidence="1">UDP-2,3-diacylglucosamine hydrolase</fullName>
        <ecNumber evidence="1">3.6.1.54</ecNumber>
    </recommendedName>
    <alternativeName>
        <fullName evidence="1">UDP-2,3-diacylglucosamine diphosphatase</fullName>
    </alternativeName>
</protein>
<sequence>MATLFIADLHLQTEEPAIVAGFLRFLAVEARQADALYILGDLFEAWIGDDDPNPLHREMAVAIKSLVDSGVPCFFIHGNRDFLIGKRFARESGMILLPQEKVLDLYGRNVLIMHGDTLCTDDAGYQAFRAKVHNPWVQRLFLTLPLFIRRRIAARMRAGSKAANSSKSLDIMDVNAQTVVAEMEKHRVQWLIHGHTHRPAVHELSANDQPAFRVVLGAWHHEGSMVKVTPDNVELIAFPL</sequence>
<proteinExistence type="inferred from homology"/>
<keyword id="KW-0997">Cell inner membrane</keyword>
<keyword id="KW-1003">Cell membrane</keyword>
<keyword id="KW-0378">Hydrolase</keyword>
<keyword id="KW-0441">Lipid A biosynthesis</keyword>
<keyword id="KW-0444">Lipid biosynthesis</keyword>
<keyword id="KW-0443">Lipid metabolism</keyword>
<keyword id="KW-0464">Manganese</keyword>
<keyword id="KW-0472">Membrane</keyword>
<keyword id="KW-0479">Metal-binding</keyword>
<keyword id="KW-1185">Reference proteome</keyword>
<evidence type="ECO:0000255" key="1">
    <source>
        <dbReference type="HAMAP-Rule" id="MF_00575"/>
    </source>
</evidence>
<reference key="1">
    <citation type="journal article" date="2001" name="Nature">
        <title>Complete genome sequence of Salmonella enterica serovar Typhimurium LT2.</title>
        <authorList>
            <person name="McClelland M."/>
            <person name="Sanderson K.E."/>
            <person name="Spieth J."/>
            <person name="Clifton S.W."/>
            <person name="Latreille P."/>
            <person name="Courtney L."/>
            <person name="Porwollik S."/>
            <person name="Ali J."/>
            <person name="Dante M."/>
            <person name="Du F."/>
            <person name="Hou S."/>
            <person name="Layman D."/>
            <person name="Leonard S."/>
            <person name="Nguyen C."/>
            <person name="Scott K."/>
            <person name="Holmes A."/>
            <person name="Grewal N."/>
            <person name="Mulvaney E."/>
            <person name="Ryan E."/>
            <person name="Sun H."/>
            <person name="Florea L."/>
            <person name="Miller W."/>
            <person name="Stoneking T."/>
            <person name="Nhan M."/>
            <person name="Waterston R."/>
            <person name="Wilson R.K."/>
        </authorList>
    </citation>
    <scope>NUCLEOTIDE SEQUENCE [LARGE SCALE GENOMIC DNA]</scope>
    <source>
        <strain>LT2 / SGSC1412 / ATCC 700720</strain>
    </source>
</reference>
<accession>Q8ZR69</accession>
<name>LPXH_SALTY</name>
<feature type="chain" id="PRO_0000214122" description="UDP-2,3-diacylglucosamine hydrolase">
    <location>
        <begin position="1"/>
        <end position="240"/>
    </location>
</feature>
<feature type="binding site" evidence="1">
    <location>
        <position position="8"/>
    </location>
    <ligand>
        <name>Mn(2+)</name>
        <dbReference type="ChEBI" id="CHEBI:29035"/>
        <label>1</label>
    </ligand>
</feature>
<feature type="binding site" evidence="1">
    <location>
        <position position="10"/>
    </location>
    <ligand>
        <name>Mn(2+)</name>
        <dbReference type="ChEBI" id="CHEBI:29035"/>
        <label>1</label>
    </ligand>
</feature>
<feature type="binding site" evidence="1">
    <location>
        <position position="41"/>
    </location>
    <ligand>
        <name>Mn(2+)</name>
        <dbReference type="ChEBI" id="CHEBI:29035"/>
        <label>1</label>
    </ligand>
</feature>
<feature type="binding site" evidence="1">
    <location>
        <position position="41"/>
    </location>
    <ligand>
        <name>Mn(2+)</name>
        <dbReference type="ChEBI" id="CHEBI:29035"/>
        <label>2</label>
    </ligand>
</feature>
<feature type="binding site" evidence="1">
    <location>
        <begin position="79"/>
        <end position="80"/>
    </location>
    <ligand>
        <name>substrate</name>
    </ligand>
</feature>
<feature type="binding site" evidence="1">
    <location>
        <position position="79"/>
    </location>
    <ligand>
        <name>Mn(2+)</name>
        <dbReference type="ChEBI" id="CHEBI:29035"/>
        <label>2</label>
    </ligand>
</feature>
<feature type="binding site" evidence="1">
    <location>
        <position position="114"/>
    </location>
    <ligand>
        <name>Mn(2+)</name>
        <dbReference type="ChEBI" id="CHEBI:29035"/>
        <label>2</label>
    </ligand>
</feature>
<feature type="binding site" evidence="1">
    <location>
        <position position="122"/>
    </location>
    <ligand>
        <name>substrate</name>
    </ligand>
</feature>
<feature type="binding site" evidence="1">
    <location>
        <position position="160"/>
    </location>
    <ligand>
        <name>substrate</name>
    </ligand>
</feature>
<feature type="binding site" evidence="1">
    <location>
        <position position="164"/>
    </location>
    <ligand>
        <name>substrate</name>
    </ligand>
</feature>
<feature type="binding site" evidence="1">
    <location>
        <position position="167"/>
    </location>
    <ligand>
        <name>substrate</name>
    </ligand>
</feature>
<feature type="binding site" evidence="1">
    <location>
        <position position="195"/>
    </location>
    <ligand>
        <name>Mn(2+)</name>
        <dbReference type="ChEBI" id="CHEBI:29035"/>
        <label>2</label>
    </ligand>
</feature>
<feature type="binding site" evidence="1">
    <location>
        <position position="195"/>
    </location>
    <ligand>
        <name>substrate</name>
    </ligand>
</feature>
<feature type="binding site" evidence="1">
    <location>
        <position position="197"/>
    </location>
    <ligand>
        <name>Mn(2+)</name>
        <dbReference type="ChEBI" id="CHEBI:29035"/>
        <label>1</label>
    </ligand>
</feature>
<comment type="function">
    <text evidence="1">Hydrolyzes the pyrophosphate bond of UDP-2,3-diacylglucosamine to yield 2,3-diacylglucosamine 1-phosphate (lipid X) and UMP by catalyzing the attack of water at the alpha-P atom. Involved in the biosynthesis of lipid A, a phosphorylated glycolipid that anchors the lipopolysaccharide to the outer membrane of the cell.</text>
</comment>
<comment type="catalytic activity">
    <reaction evidence="1">
        <text>UDP-2-N,3-O-bis[(3R)-3-hydroxytetradecanoyl]-alpha-D-glucosamine + H2O = 2-N,3-O-bis[(3R)-3-hydroxytetradecanoyl]-alpha-D-glucosaminyl 1-phosphate + UMP + 2 H(+)</text>
        <dbReference type="Rhea" id="RHEA:25213"/>
        <dbReference type="ChEBI" id="CHEBI:15377"/>
        <dbReference type="ChEBI" id="CHEBI:15378"/>
        <dbReference type="ChEBI" id="CHEBI:57865"/>
        <dbReference type="ChEBI" id="CHEBI:57957"/>
        <dbReference type="ChEBI" id="CHEBI:78847"/>
        <dbReference type="EC" id="3.6.1.54"/>
    </reaction>
</comment>
<comment type="cofactor">
    <cofactor evidence="1">
        <name>Mn(2+)</name>
        <dbReference type="ChEBI" id="CHEBI:29035"/>
    </cofactor>
    <text evidence="1">Binds 2 Mn(2+) ions per subunit in a binuclear metal center.</text>
</comment>
<comment type="pathway">
    <text evidence="1">Glycolipid biosynthesis; lipid IV(A) biosynthesis; lipid IV(A) from (3R)-3-hydroxytetradecanoyl-[acyl-carrier-protein] and UDP-N-acetyl-alpha-D-glucosamine: step 4/6.</text>
</comment>
<comment type="subcellular location">
    <subcellularLocation>
        <location evidence="1">Cell inner membrane</location>
        <topology evidence="1">Peripheral membrane protein</topology>
        <orientation evidence="1">Cytoplasmic side</orientation>
    </subcellularLocation>
</comment>
<comment type="similarity">
    <text evidence="1">Belongs to the LpxH family.</text>
</comment>
<gene>
    <name evidence="1" type="primary">lpxH</name>
    <name type="ordered locus">STM0535</name>
</gene>
<dbReference type="EC" id="3.6.1.54" evidence="1"/>
<dbReference type="EMBL" id="AE006468">
    <property type="protein sequence ID" value="AAL19489.1"/>
    <property type="molecule type" value="Genomic_DNA"/>
</dbReference>
<dbReference type="RefSeq" id="NP_459530.1">
    <property type="nucleotide sequence ID" value="NC_003197.2"/>
</dbReference>
<dbReference type="RefSeq" id="WP_000212284.1">
    <property type="nucleotide sequence ID" value="NC_003197.2"/>
</dbReference>
<dbReference type="SMR" id="Q8ZR69"/>
<dbReference type="STRING" id="99287.STM0535"/>
<dbReference type="PaxDb" id="99287-STM0535"/>
<dbReference type="GeneID" id="1252055"/>
<dbReference type="KEGG" id="stm:STM0535"/>
<dbReference type="PATRIC" id="fig|99287.12.peg.568"/>
<dbReference type="HOGENOM" id="CLU_074586_0_0_6"/>
<dbReference type="OMA" id="GHRHLPM"/>
<dbReference type="PhylomeDB" id="Q8ZR69"/>
<dbReference type="BioCyc" id="SENT99287:STM0535-MONOMER"/>
<dbReference type="UniPathway" id="UPA00359">
    <property type="reaction ID" value="UER00480"/>
</dbReference>
<dbReference type="Proteomes" id="UP000001014">
    <property type="component" value="Chromosome"/>
</dbReference>
<dbReference type="GO" id="GO:0005737">
    <property type="term" value="C:cytoplasm"/>
    <property type="evidence" value="ECO:0007669"/>
    <property type="project" value="InterPro"/>
</dbReference>
<dbReference type="GO" id="GO:0019897">
    <property type="term" value="C:extrinsic component of plasma membrane"/>
    <property type="evidence" value="ECO:0007669"/>
    <property type="project" value="UniProtKB-UniRule"/>
</dbReference>
<dbReference type="GO" id="GO:0030145">
    <property type="term" value="F:manganese ion binding"/>
    <property type="evidence" value="ECO:0007669"/>
    <property type="project" value="UniProtKB-UniRule"/>
</dbReference>
<dbReference type="GO" id="GO:0008758">
    <property type="term" value="F:UDP-2,3-diacylglucosamine hydrolase activity"/>
    <property type="evidence" value="ECO:0000318"/>
    <property type="project" value="GO_Central"/>
</dbReference>
<dbReference type="GO" id="GO:0009245">
    <property type="term" value="P:lipid A biosynthetic process"/>
    <property type="evidence" value="ECO:0000318"/>
    <property type="project" value="GO_Central"/>
</dbReference>
<dbReference type="CDD" id="cd07398">
    <property type="entry name" value="MPP_YbbF-LpxH"/>
    <property type="match status" value="1"/>
</dbReference>
<dbReference type="FunFam" id="3.60.21.10:FF:000012">
    <property type="entry name" value="UDP-2,3-diacylglucosamine hydrolase"/>
    <property type="match status" value="1"/>
</dbReference>
<dbReference type="Gene3D" id="3.60.21.10">
    <property type="match status" value="1"/>
</dbReference>
<dbReference type="HAMAP" id="MF_00575">
    <property type="entry name" value="LpxH"/>
    <property type="match status" value="1"/>
</dbReference>
<dbReference type="InterPro" id="IPR004843">
    <property type="entry name" value="Calcineurin-like_PHP_ApaH"/>
</dbReference>
<dbReference type="InterPro" id="IPR043461">
    <property type="entry name" value="LpxH-like"/>
</dbReference>
<dbReference type="InterPro" id="IPR029052">
    <property type="entry name" value="Metallo-depent_PP-like"/>
</dbReference>
<dbReference type="InterPro" id="IPR010138">
    <property type="entry name" value="UDP-diacylglucosamine_Hdrlase"/>
</dbReference>
<dbReference type="NCBIfam" id="TIGR01854">
    <property type="entry name" value="lipid_A_lpxH"/>
    <property type="match status" value="1"/>
</dbReference>
<dbReference type="NCBIfam" id="NF003743">
    <property type="entry name" value="PRK05340.1"/>
    <property type="match status" value="1"/>
</dbReference>
<dbReference type="PANTHER" id="PTHR34990:SF1">
    <property type="entry name" value="UDP-2,3-DIACYLGLUCOSAMINE HYDROLASE"/>
    <property type="match status" value="1"/>
</dbReference>
<dbReference type="PANTHER" id="PTHR34990">
    <property type="entry name" value="UDP-2,3-DIACYLGLUCOSAMINE HYDROLASE-RELATED"/>
    <property type="match status" value="1"/>
</dbReference>
<dbReference type="Pfam" id="PF00149">
    <property type="entry name" value="Metallophos"/>
    <property type="match status" value="1"/>
</dbReference>
<dbReference type="SUPFAM" id="SSF56300">
    <property type="entry name" value="Metallo-dependent phosphatases"/>
    <property type="match status" value="1"/>
</dbReference>